<proteinExistence type="inferred from homology"/>
<sequence>MLKGIHKYLLMCFGTVLFTVQANAARIMSNNPIKEDWQCKVVDGEWSCKRAKKPKSVFDKKLTKTEKEKALADDLAWVKKPSYFVGGYYSNDNQFTKALCESKKTDLSYEKSEFDNYGTLIASGNVQVLQCDQELYGNNAIINLNSNNSAIRSLVMAGDVIVKQPSTGIVIRTTELDADMNNGTYSTGEAYFRLAREMPKTRIYDKEHFSGYLRGYAKTFKKESSGDIVLSDGYITSGDPYDNAWKITGNNIDIDTNTHMAYVKNGYFEIQDIPVMYIPYFSHPIDDRRRSGFLYPGFVQNANSGIGISVPYYFNLAPNYDLMLQSVIWSQRGIIENGTFRYMTKYFQGQFEGSLVPYDFKEGKMRGSFTLSTTGQYENINTNFKYEYVSDQNYYNDFSAGNVNLVTKTLLDREFDLTYTNDYVDSGLTVLDYGVVNPLLTVDNTPYAKLPEVKLNLTSDGYTPDYLTLSAQTLNTFFYKTAGPANTNPGAPQGTNVNAFRAYESPKIAFNFNKTWGYLNPSLEVPIRYYQLKNSPTDTIQFANSSVTSVLPIFNIDAGAYFDKDYTNENGTYTSTLHPRLFYTYIPYQDQTNIPLFDTSLQNEQYMQMFQVNRFTGYDRINNANQLTYAIEASTTNQDNGTTLASAKIGQMAYFADRKVNLCQGNSACPNPGLMDPFSTDTFSPIMSSFEFQVMKNIYLSAQVNYRVNQQNVDYQVYQLSYKDENENIFNVSYNNIANNWNSLTQQQIAEGAKPQPQETITLSTVLNITDHWGIAALWNYNFQQKQIANIFAGLQYNAKSWAVRALWQKTAYTNQDPNNPTLLGPLVNTYMFEFELKGLGGIGNTSDISSRLQQINGYQVGEWGNGI</sequence>
<evidence type="ECO:0000255" key="1">
    <source>
        <dbReference type="HAMAP-Rule" id="MF_01411"/>
    </source>
</evidence>
<name>LPTD_FRAT1</name>
<accession>Q14IY9</accession>
<feature type="signal peptide" evidence="1">
    <location>
        <begin position="1"/>
        <end position="24"/>
    </location>
</feature>
<feature type="chain" id="PRO_0000281608" description="LPS-assembly protein LptD">
    <location>
        <begin position="25"/>
        <end position="868"/>
    </location>
</feature>
<comment type="function">
    <text evidence="1">Together with LptE, is involved in the assembly of lipopolysaccharide (LPS) at the surface of the outer membrane.</text>
</comment>
<comment type="subunit">
    <text evidence="1">Component of the lipopolysaccharide transport and assembly complex. Interacts with LptE and LptA.</text>
</comment>
<comment type="subcellular location">
    <subcellularLocation>
        <location evidence="1">Cell outer membrane</location>
    </subcellularLocation>
</comment>
<comment type="similarity">
    <text evidence="1">Belongs to the LptD family.</text>
</comment>
<keyword id="KW-0998">Cell outer membrane</keyword>
<keyword id="KW-0472">Membrane</keyword>
<keyword id="KW-0732">Signal</keyword>
<protein>
    <recommendedName>
        <fullName evidence="1">LPS-assembly protein LptD</fullName>
    </recommendedName>
</protein>
<dbReference type="EMBL" id="AM286280">
    <property type="protein sequence ID" value="CAL08483.1"/>
    <property type="molecule type" value="Genomic_DNA"/>
</dbReference>
<dbReference type="RefSeq" id="WP_003023202.1">
    <property type="nucleotide sequence ID" value="NC_008245.1"/>
</dbReference>
<dbReference type="SMR" id="Q14IY9"/>
<dbReference type="KEGG" id="ftf:FTF0467"/>
<dbReference type="HOGENOM" id="CLU_009039_1_0_6"/>
<dbReference type="GO" id="GO:0009279">
    <property type="term" value="C:cell outer membrane"/>
    <property type="evidence" value="ECO:0007669"/>
    <property type="project" value="UniProtKB-SubCell"/>
</dbReference>
<dbReference type="GO" id="GO:1990351">
    <property type="term" value="C:transporter complex"/>
    <property type="evidence" value="ECO:0007669"/>
    <property type="project" value="TreeGrafter"/>
</dbReference>
<dbReference type="GO" id="GO:0043165">
    <property type="term" value="P:Gram-negative-bacterium-type cell outer membrane assembly"/>
    <property type="evidence" value="ECO:0007669"/>
    <property type="project" value="UniProtKB-UniRule"/>
</dbReference>
<dbReference type="GO" id="GO:0015920">
    <property type="term" value="P:lipopolysaccharide transport"/>
    <property type="evidence" value="ECO:0007669"/>
    <property type="project" value="InterPro"/>
</dbReference>
<dbReference type="HAMAP" id="MF_01411">
    <property type="entry name" value="LPS_assembly_LptD"/>
    <property type="match status" value="1"/>
</dbReference>
<dbReference type="InterPro" id="IPR020889">
    <property type="entry name" value="LipoPS_assembly_LptD"/>
</dbReference>
<dbReference type="InterPro" id="IPR050218">
    <property type="entry name" value="LptD"/>
</dbReference>
<dbReference type="InterPro" id="IPR007543">
    <property type="entry name" value="LptD_C"/>
</dbReference>
<dbReference type="InterPro" id="IPR005653">
    <property type="entry name" value="OstA-like_N"/>
</dbReference>
<dbReference type="PANTHER" id="PTHR30189">
    <property type="entry name" value="LPS-ASSEMBLY PROTEIN"/>
    <property type="match status" value="1"/>
</dbReference>
<dbReference type="PANTHER" id="PTHR30189:SF1">
    <property type="entry name" value="LPS-ASSEMBLY PROTEIN LPTD"/>
    <property type="match status" value="1"/>
</dbReference>
<dbReference type="Pfam" id="PF04453">
    <property type="entry name" value="LptD"/>
    <property type="match status" value="1"/>
</dbReference>
<dbReference type="Pfam" id="PF03968">
    <property type="entry name" value="LptD_N"/>
    <property type="match status" value="1"/>
</dbReference>
<reference key="1">
    <citation type="journal article" date="2007" name="PLoS ONE">
        <title>Genome sequencing shows that European isolates of Francisella tularensis subspecies tularensis are almost identical to US laboratory strain Schu S4.</title>
        <authorList>
            <person name="Chaudhuri R.R."/>
            <person name="Ren C.-P."/>
            <person name="Desmond L."/>
            <person name="Vincent G.A."/>
            <person name="Silman N.J."/>
            <person name="Brehm J.K."/>
            <person name="Elmore M.J."/>
            <person name="Hudson M.J."/>
            <person name="Forsman M."/>
            <person name="Isherwood K.E."/>
            <person name="Gurycova D."/>
            <person name="Minton N.P."/>
            <person name="Titball R.W."/>
            <person name="Pallen M.J."/>
            <person name="Vipond R."/>
        </authorList>
    </citation>
    <scope>NUCLEOTIDE SEQUENCE [LARGE SCALE GENOMIC DNA]</scope>
    <source>
        <strain>FSC 198</strain>
    </source>
</reference>
<organism>
    <name type="scientific">Francisella tularensis subsp. tularensis (strain FSC 198)</name>
    <dbReference type="NCBI Taxonomy" id="393115"/>
    <lineage>
        <taxon>Bacteria</taxon>
        <taxon>Pseudomonadati</taxon>
        <taxon>Pseudomonadota</taxon>
        <taxon>Gammaproteobacteria</taxon>
        <taxon>Thiotrichales</taxon>
        <taxon>Francisellaceae</taxon>
        <taxon>Francisella</taxon>
    </lineage>
</organism>
<gene>
    <name evidence="1" type="primary">lptD</name>
    <name type="synonym">imp</name>
    <name type="synonym">ostA</name>
    <name type="ordered locus">FTF0467</name>
</gene>